<dbReference type="EC" id="7.1.1.9"/>
<dbReference type="EMBL" id="AF028226">
    <property type="protein sequence ID" value="AAC00119.1"/>
    <property type="molecule type" value="Genomic_DNA"/>
</dbReference>
<dbReference type="SMR" id="O47678"/>
<dbReference type="GO" id="GO:0005743">
    <property type="term" value="C:mitochondrial inner membrane"/>
    <property type="evidence" value="ECO:0007669"/>
    <property type="project" value="UniProtKB-SubCell"/>
</dbReference>
<dbReference type="GO" id="GO:0045277">
    <property type="term" value="C:respiratory chain complex IV"/>
    <property type="evidence" value="ECO:0000250"/>
    <property type="project" value="UniProtKB"/>
</dbReference>
<dbReference type="GO" id="GO:0005507">
    <property type="term" value="F:copper ion binding"/>
    <property type="evidence" value="ECO:0007669"/>
    <property type="project" value="InterPro"/>
</dbReference>
<dbReference type="GO" id="GO:0004129">
    <property type="term" value="F:cytochrome-c oxidase activity"/>
    <property type="evidence" value="ECO:0007669"/>
    <property type="project" value="UniProtKB-EC"/>
</dbReference>
<dbReference type="GO" id="GO:0042773">
    <property type="term" value="P:ATP synthesis coupled electron transport"/>
    <property type="evidence" value="ECO:0007669"/>
    <property type="project" value="TreeGrafter"/>
</dbReference>
<dbReference type="CDD" id="cd13912">
    <property type="entry name" value="CcO_II_C"/>
    <property type="match status" value="1"/>
</dbReference>
<dbReference type="FunFam" id="1.10.287.90:FF:000001">
    <property type="entry name" value="Cytochrome c oxidase subunit 2"/>
    <property type="match status" value="1"/>
</dbReference>
<dbReference type="FunFam" id="2.60.40.420:FF:000001">
    <property type="entry name" value="Cytochrome c oxidase subunit 2"/>
    <property type="match status" value="1"/>
</dbReference>
<dbReference type="Gene3D" id="1.10.287.90">
    <property type="match status" value="1"/>
</dbReference>
<dbReference type="Gene3D" id="2.60.40.420">
    <property type="entry name" value="Cupredoxins - blue copper proteins"/>
    <property type="match status" value="1"/>
</dbReference>
<dbReference type="InterPro" id="IPR045187">
    <property type="entry name" value="CcO_II"/>
</dbReference>
<dbReference type="InterPro" id="IPR002429">
    <property type="entry name" value="CcO_II-like_C"/>
</dbReference>
<dbReference type="InterPro" id="IPR034210">
    <property type="entry name" value="CcO_II_C"/>
</dbReference>
<dbReference type="InterPro" id="IPR001505">
    <property type="entry name" value="Copper_CuA"/>
</dbReference>
<dbReference type="InterPro" id="IPR008972">
    <property type="entry name" value="Cupredoxin"/>
</dbReference>
<dbReference type="InterPro" id="IPR014222">
    <property type="entry name" value="Cyt_c_oxidase_su2"/>
</dbReference>
<dbReference type="InterPro" id="IPR011759">
    <property type="entry name" value="Cyt_c_oxidase_su2_TM_dom"/>
</dbReference>
<dbReference type="InterPro" id="IPR036257">
    <property type="entry name" value="Cyt_c_oxidase_su2_TM_sf"/>
</dbReference>
<dbReference type="NCBIfam" id="TIGR02866">
    <property type="entry name" value="CoxB"/>
    <property type="match status" value="1"/>
</dbReference>
<dbReference type="PANTHER" id="PTHR22888:SF9">
    <property type="entry name" value="CYTOCHROME C OXIDASE SUBUNIT 2"/>
    <property type="match status" value="1"/>
</dbReference>
<dbReference type="PANTHER" id="PTHR22888">
    <property type="entry name" value="CYTOCHROME C OXIDASE, SUBUNIT II"/>
    <property type="match status" value="1"/>
</dbReference>
<dbReference type="Pfam" id="PF00116">
    <property type="entry name" value="COX2"/>
    <property type="match status" value="1"/>
</dbReference>
<dbReference type="Pfam" id="PF02790">
    <property type="entry name" value="COX2_TM"/>
    <property type="match status" value="1"/>
</dbReference>
<dbReference type="PRINTS" id="PR01166">
    <property type="entry name" value="CYCOXIDASEII"/>
</dbReference>
<dbReference type="SUPFAM" id="SSF49503">
    <property type="entry name" value="Cupredoxins"/>
    <property type="match status" value="1"/>
</dbReference>
<dbReference type="SUPFAM" id="SSF81464">
    <property type="entry name" value="Cytochrome c oxidase subunit II-like, transmembrane region"/>
    <property type="match status" value="1"/>
</dbReference>
<dbReference type="PROSITE" id="PS00078">
    <property type="entry name" value="COX2"/>
    <property type="match status" value="1"/>
</dbReference>
<dbReference type="PROSITE" id="PS50857">
    <property type="entry name" value="COX2_CUA"/>
    <property type="match status" value="1"/>
</dbReference>
<dbReference type="PROSITE" id="PS50999">
    <property type="entry name" value="COX2_TM"/>
    <property type="match status" value="1"/>
</dbReference>
<reference key="1">
    <citation type="journal article" date="1997" name="Syst. Biol.">
        <title>Molecular systematics of the Canidae.</title>
        <authorList>
            <person name="Wayne R.K."/>
            <person name="Geffen E."/>
            <person name="Girman D.J."/>
            <person name="Koepfli K.-P."/>
            <person name="Lau L.M."/>
            <person name="Marshall C.R."/>
        </authorList>
    </citation>
    <scope>NUCLEOTIDE SEQUENCE [GENOMIC DNA]</scope>
</reference>
<proteinExistence type="inferred from homology"/>
<gene>
    <name type="primary">MT-CO2</name>
    <name type="synonym">COII</name>
    <name type="synonym">COX2</name>
    <name type="synonym">COXII</name>
    <name type="synonym">MTCO2</name>
</gene>
<keyword id="KW-0186">Copper</keyword>
<keyword id="KW-0249">Electron transport</keyword>
<keyword id="KW-0460">Magnesium</keyword>
<keyword id="KW-0472">Membrane</keyword>
<keyword id="KW-0479">Metal-binding</keyword>
<keyword id="KW-0496">Mitochondrion</keyword>
<keyword id="KW-0999">Mitochondrion inner membrane</keyword>
<keyword id="KW-0597">Phosphoprotein</keyword>
<keyword id="KW-0679">Respiratory chain</keyword>
<keyword id="KW-1278">Translocase</keyword>
<keyword id="KW-0812">Transmembrane</keyword>
<keyword id="KW-1133">Transmembrane helix</keyword>
<keyword id="KW-0813">Transport</keyword>
<organism>
    <name type="scientific">Lycalopex sechurae</name>
    <name type="common">Sechuran desert fox</name>
    <name type="synonym">Pseudalopex sechurae</name>
    <dbReference type="NCBI Taxonomy" id="68739"/>
    <lineage>
        <taxon>Eukaryota</taxon>
        <taxon>Metazoa</taxon>
        <taxon>Chordata</taxon>
        <taxon>Craniata</taxon>
        <taxon>Vertebrata</taxon>
        <taxon>Euteleostomi</taxon>
        <taxon>Mammalia</taxon>
        <taxon>Eutheria</taxon>
        <taxon>Laurasiatheria</taxon>
        <taxon>Carnivora</taxon>
        <taxon>Caniformia</taxon>
        <taxon>Canidae</taxon>
        <taxon>Lycalopex</taxon>
    </lineage>
</organism>
<geneLocation type="mitochondrion"/>
<protein>
    <recommendedName>
        <fullName>Cytochrome c oxidase subunit 2</fullName>
        <ecNumber>7.1.1.9</ecNumber>
    </recommendedName>
    <alternativeName>
        <fullName>Cytochrome c oxidase polypeptide II</fullName>
    </alternativeName>
</protein>
<name>COX2_LYCSE</name>
<sequence length="227" mass="26001">MAYPFQLGLQDATSPIMEELLHFHDHTLMIVFLISSLVLYIISLMLTTKLTHTSTMDAQEVETVWTILPAIILILIALPSLRILYMMDEINNPSLTVKTVGHQWYWSYEYTDYEDLNFDSYMIPTQELKPGELRLLEVDNRVVLPMEMTVRMLISSEDVLHSWAVPSLGLKTDAIPGRLNQTTLMAMRPGLYYGQCSEICGSNHSFMPIVLEMVPLSYFETWSAVMV</sequence>
<feature type="chain" id="PRO_0000183674" description="Cytochrome c oxidase subunit 2">
    <location>
        <begin position="1"/>
        <end position="227"/>
    </location>
</feature>
<feature type="topological domain" description="Mitochondrial intermembrane" evidence="4">
    <location>
        <begin position="1"/>
        <end position="14"/>
    </location>
</feature>
<feature type="transmembrane region" description="Helical; Name=I" evidence="4">
    <location>
        <begin position="15"/>
        <end position="45"/>
    </location>
</feature>
<feature type="topological domain" description="Mitochondrial matrix" evidence="4">
    <location>
        <begin position="46"/>
        <end position="59"/>
    </location>
</feature>
<feature type="transmembrane region" description="Helical; Name=II" evidence="4">
    <location>
        <begin position="60"/>
        <end position="87"/>
    </location>
</feature>
<feature type="topological domain" description="Mitochondrial intermembrane" evidence="4">
    <location>
        <begin position="88"/>
        <end position="227"/>
    </location>
</feature>
<feature type="binding site" evidence="4">
    <location>
        <position position="161"/>
    </location>
    <ligand>
        <name>Cu cation</name>
        <dbReference type="ChEBI" id="CHEBI:23378"/>
        <label>A1</label>
    </ligand>
</feature>
<feature type="binding site" evidence="4">
    <location>
        <position position="196"/>
    </location>
    <ligand>
        <name>Cu cation</name>
        <dbReference type="ChEBI" id="CHEBI:23378"/>
        <label>A1</label>
    </ligand>
</feature>
<feature type="binding site" evidence="4">
    <location>
        <position position="196"/>
    </location>
    <ligand>
        <name>Cu cation</name>
        <dbReference type="ChEBI" id="CHEBI:23378"/>
        <label>A2</label>
    </ligand>
</feature>
<feature type="binding site" evidence="4">
    <location>
        <position position="198"/>
    </location>
    <ligand>
        <name>Cu cation</name>
        <dbReference type="ChEBI" id="CHEBI:23378"/>
        <label>A2</label>
    </ligand>
</feature>
<feature type="binding site" evidence="4">
    <location>
        <position position="198"/>
    </location>
    <ligand>
        <name>Mg(2+)</name>
        <dbReference type="ChEBI" id="CHEBI:18420"/>
        <note>ligand shared with MT-CO1</note>
    </ligand>
</feature>
<feature type="binding site" evidence="4">
    <location>
        <position position="200"/>
    </location>
    <ligand>
        <name>Cu cation</name>
        <dbReference type="ChEBI" id="CHEBI:23378"/>
        <label>A1</label>
    </ligand>
</feature>
<feature type="binding site" evidence="4">
    <location>
        <position position="200"/>
    </location>
    <ligand>
        <name>Cu cation</name>
        <dbReference type="ChEBI" id="CHEBI:23378"/>
        <label>A2</label>
    </ligand>
</feature>
<feature type="binding site" evidence="4">
    <location>
        <position position="204"/>
    </location>
    <ligand>
        <name>Cu cation</name>
        <dbReference type="ChEBI" id="CHEBI:23378"/>
        <label>A2</label>
    </ligand>
</feature>
<feature type="binding site" evidence="4">
    <location>
        <position position="207"/>
    </location>
    <ligand>
        <name>Cu cation</name>
        <dbReference type="ChEBI" id="CHEBI:23378"/>
        <label>A1</label>
    </ligand>
</feature>
<feature type="modified residue" description="Phosphotyrosine" evidence="2">
    <location>
        <position position="218"/>
    </location>
</feature>
<evidence type="ECO:0000250" key="1">
    <source>
        <dbReference type="UniProtKB" id="P00403"/>
    </source>
</evidence>
<evidence type="ECO:0000250" key="2">
    <source>
        <dbReference type="UniProtKB" id="P00406"/>
    </source>
</evidence>
<evidence type="ECO:0000250" key="3">
    <source>
        <dbReference type="UniProtKB" id="P00410"/>
    </source>
</evidence>
<evidence type="ECO:0000250" key="4">
    <source>
        <dbReference type="UniProtKB" id="P68530"/>
    </source>
</evidence>
<evidence type="ECO:0000305" key="5"/>
<accession>O47678</accession>
<comment type="function">
    <text evidence="3">Component of the cytochrome c oxidase, the last enzyme in the mitochondrial electron transport chain which drives oxidative phosphorylation. The respiratory chain contains 3 multisubunit complexes succinate dehydrogenase (complex II, CII), ubiquinol-cytochrome c oxidoreductase (cytochrome b-c1 complex, complex III, CIII) and cytochrome c oxidase (complex IV, CIV), that cooperate to transfer electrons derived from NADH and succinate to molecular oxygen, creating an electrochemical gradient over the inner membrane that drives transmembrane transport and the ATP synthase. Cytochrome c oxidase is the component of the respiratory chain that catalyzes the reduction of oxygen to water. Electrons originating from reduced cytochrome c in the intermembrane space (IMS) are transferred via the dinuclear copper A center (CU(A)) of subunit 2 and heme A of subunit 1 to the active site in subunit 1, a binuclear center (BNC) formed by heme A3 and copper B (CU(B)). The BNC reduces molecular oxygen to 2 water molecules using 4 electrons from cytochrome c in the IMS and 4 protons from the mitochondrial matrix.</text>
</comment>
<comment type="catalytic activity">
    <reaction evidence="3">
        <text>4 Fe(II)-[cytochrome c] + O2 + 8 H(+)(in) = 4 Fe(III)-[cytochrome c] + 2 H2O + 4 H(+)(out)</text>
        <dbReference type="Rhea" id="RHEA:11436"/>
        <dbReference type="Rhea" id="RHEA-COMP:10350"/>
        <dbReference type="Rhea" id="RHEA-COMP:14399"/>
        <dbReference type="ChEBI" id="CHEBI:15377"/>
        <dbReference type="ChEBI" id="CHEBI:15378"/>
        <dbReference type="ChEBI" id="CHEBI:15379"/>
        <dbReference type="ChEBI" id="CHEBI:29033"/>
        <dbReference type="ChEBI" id="CHEBI:29034"/>
        <dbReference type="EC" id="7.1.1.9"/>
    </reaction>
    <physiologicalReaction direction="left-to-right" evidence="3">
        <dbReference type="Rhea" id="RHEA:11437"/>
    </physiologicalReaction>
</comment>
<comment type="cofactor">
    <cofactor evidence="4">
        <name>Cu cation</name>
        <dbReference type="ChEBI" id="CHEBI:23378"/>
    </cofactor>
    <text evidence="4">Binds a dinuclear copper A center per subunit.</text>
</comment>
<comment type="subunit">
    <text evidence="1 4">Component of the cytochrome c oxidase (complex IV, CIV), a multisubunit enzyme composed of 14 subunits. The complex is composed of a catalytic core of 3 subunits MT-CO1, MT-CO2 and MT-CO3, encoded in the mitochondrial DNA, and 11 supernumerary subunits COX4I, COX5A, COX5B, COX6A, COX6B, COX6C, COX7A, COX7B, COX7C, COX8 and NDUFA4, which are encoded in the nuclear genome. The complex exists as a monomer or a dimer and forms supercomplexes (SCs) in the inner mitochondrial membrane with NADH-ubiquinone oxidoreductase (complex I, CI) and ubiquinol-cytochrome c oxidoreductase (cytochrome b-c1 complex, complex III, CIII), resulting in different assemblies (supercomplex SCI(1)III(2)IV(1) and megacomplex MCI(2)III(2)IV(2)) (By similarity). Found in a complex with TMEM177, COA6, COX18, COX20, SCO1 and SCO2. Interacts with TMEM177 in a COX20-dependent manner. Interacts with COX20. Interacts with COX16 (By similarity).</text>
</comment>
<comment type="subcellular location">
    <subcellularLocation>
        <location evidence="4">Mitochondrion inner membrane</location>
        <topology evidence="4">Multi-pass membrane protein</topology>
    </subcellularLocation>
</comment>
<comment type="similarity">
    <text evidence="5">Belongs to the cytochrome c oxidase subunit 2 family.</text>
</comment>